<evidence type="ECO:0000255" key="1">
    <source>
        <dbReference type="HAMAP-Rule" id="MF_01315"/>
    </source>
</evidence>
<evidence type="ECO:0000305" key="2"/>
<keyword id="KW-0687">Ribonucleoprotein</keyword>
<keyword id="KW-0689">Ribosomal protein</keyword>
<keyword id="KW-0694">RNA-binding</keyword>
<keyword id="KW-0699">rRNA-binding</keyword>
<reference key="1">
    <citation type="journal article" date="2004" name="Proc. Natl. Acad. Sci. U.S.A.">
        <title>Genome sequence of Picrophilus torridus and its implications for life around pH 0.</title>
        <authorList>
            <person name="Fuetterer O."/>
            <person name="Angelov A."/>
            <person name="Liesegang H."/>
            <person name="Gottschalk G."/>
            <person name="Schleper C."/>
            <person name="Schepers B."/>
            <person name="Dock C."/>
            <person name="Antranikian G."/>
            <person name="Liebl W."/>
        </authorList>
    </citation>
    <scope>NUCLEOTIDE SEQUENCE [LARGE SCALE GENOMIC DNA]</scope>
    <source>
        <strain>ATCC 700027 / DSM 9790 / JCM 10055 / NBRC 100828 / KAW 2/3</strain>
    </source>
</reference>
<gene>
    <name evidence="1" type="primary">rps13</name>
    <name type="ordered locus">PTO1219</name>
</gene>
<name>RS13_PICTO</name>
<accession>Q6KZP8</accession>
<proteinExistence type="inferred from homology"/>
<feature type="chain" id="PRO_0000306762" description="Small ribosomal subunit protein uS13">
    <location>
        <begin position="1"/>
        <end position="158"/>
    </location>
</feature>
<dbReference type="EMBL" id="AE017261">
    <property type="protein sequence ID" value="AAT43804.1"/>
    <property type="molecule type" value="Genomic_DNA"/>
</dbReference>
<dbReference type="RefSeq" id="WP_011178020.1">
    <property type="nucleotide sequence ID" value="NC_005877.1"/>
</dbReference>
<dbReference type="SMR" id="Q6KZP8"/>
<dbReference type="FunCoup" id="Q6KZP8">
    <property type="interactions" value="200"/>
</dbReference>
<dbReference type="STRING" id="263820.PTO1219"/>
<dbReference type="PaxDb" id="263820-PTO1219"/>
<dbReference type="GeneID" id="2844325"/>
<dbReference type="KEGG" id="pto:PTO1219"/>
<dbReference type="PATRIC" id="fig|263820.9.peg.1267"/>
<dbReference type="eggNOG" id="arCOG01722">
    <property type="taxonomic scope" value="Archaea"/>
</dbReference>
<dbReference type="HOGENOM" id="CLU_103849_0_0_2"/>
<dbReference type="InParanoid" id="Q6KZP8"/>
<dbReference type="OrthoDB" id="372127at2157"/>
<dbReference type="Proteomes" id="UP000000438">
    <property type="component" value="Chromosome"/>
</dbReference>
<dbReference type="GO" id="GO:0005829">
    <property type="term" value="C:cytosol"/>
    <property type="evidence" value="ECO:0007669"/>
    <property type="project" value="TreeGrafter"/>
</dbReference>
<dbReference type="GO" id="GO:0015935">
    <property type="term" value="C:small ribosomal subunit"/>
    <property type="evidence" value="ECO:0007669"/>
    <property type="project" value="TreeGrafter"/>
</dbReference>
<dbReference type="GO" id="GO:0019843">
    <property type="term" value="F:rRNA binding"/>
    <property type="evidence" value="ECO:0007669"/>
    <property type="project" value="UniProtKB-UniRule"/>
</dbReference>
<dbReference type="GO" id="GO:0003735">
    <property type="term" value="F:structural constituent of ribosome"/>
    <property type="evidence" value="ECO:0007669"/>
    <property type="project" value="InterPro"/>
</dbReference>
<dbReference type="GO" id="GO:0006412">
    <property type="term" value="P:translation"/>
    <property type="evidence" value="ECO:0007669"/>
    <property type="project" value="UniProtKB-UniRule"/>
</dbReference>
<dbReference type="Gene3D" id="1.10.8.50">
    <property type="match status" value="1"/>
</dbReference>
<dbReference type="Gene3D" id="4.10.910.10">
    <property type="entry name" value="30s ribosomal protein s13, domain 2"/>
    <property type="match status" value="1"/>
</dbReference>
<dbReference type="HAMAP" id="MF_01315">
    <property type="entry name" value="Ribosomal_uS13"/>
    <property type="match status" value="1"/>
</dbReference>
<dbReference type="InterPro" id="IPR027437">
    <property type="entry name" value="Rbsml_uS13_C"/>
</dbReference>
<dbReference type="InterPro" id="IPR001892">
    <property type="entry name" value="Ribosomal_uS13"/>
</dbReference>
<dbReference type="InterPro" id="IPR010979">
    <property type="entry name" value="Ribosomal_uS13-like_H2TH"/>
</dbReference>
<dbReference type="InterPro" id="IPR019977">
    <property type="entry name" value="Ribosomal_uS13_archaeal"/>
</dbReference>
<dbReference type="InterPro" id="IPR018269">
    <property type="entry name" value="Ribosomal_uS13_CS"/>
</dbReference>
<dbReference type="NCBIfam" id="NF003140">
    <property type="entry name" value="PRK04053.1"/>
    <property type="match status" value="1"/>
</dbReference>
<dbReference type="NCBIfam" id="TIGR03629">
    <property type="entry name" value="uS13_arch"/>
    <property type="match status" value="1"/>
</dbReference>
<dbReference type="PANTHER" id="PTHR10871">
    <property type="entry name" value="30S RIBOSOMAL PROTEIN S13/40S RIBOSOMAL PROTEIN S18"/>
    <property type="match status" value="1"/>
</dbReference>
<dbReference type="PANTHER" id="PTHR10871:SF3">
    <property type="entry name" value="SMALL RIBOSOMAL SUBUNIT PROTEIN US13"/>
    <property type="match status" value="1"/>
</dbReference>
<dbReference type="Pfam" id="PF00416">
    <property type="entry name" value="Ribosomal_S13"/>
    <property type="match status" value="1"/>
</dbReference>
<dbReference type="PIRSF" id="PIRSF002134">
    <property type="entry name" value="Ribosomal_S13"/>
    <property type="match status" value="1"/>
</dbReference>
<dbReference type="SUPFAM" id="SSF46946">
    <property type="entry name" value="S13-like H2TH domain"/>
    <property type="match status" value="1"/>
</dbReference>
<dbReference type="PROSITE" id="PS00646">
    <property type="entry name" value="RIBOSOMAL_S13_1"/>
    <property type="match status" value="1"/>
</dbReference>
<dbReference type="PROSITE" id="PS50159">
    <property type="entry name" value="RIBOSOMAL_S13_2"/>
    <property type="match status" value="1"/>
</dbReference>
<comment type="function">
    <text evidence="1">Located at the top of the head of the 30S subunit, it contacts several helices of the 16S rRNA. In the 70S ribosome it contacts the 23S rRNA (bridge B1a) and protein L5 of the 50S subunit (bridge B1b), connecting the 2 subunits; these bridges are implicated in subunit movement.</text>
</comment>
<comment type="subunit">
    <text evidence="1">Part of the 30S ribosomal subunit. Forms a loose heterodimer with protein S19. Forms two bridges to the 50S subunit in the 70S ribosome.</text>
</comment>
<comment type="similarity">
    <text evidence="1">Belongs to the universal ribosomal protein uS13 family.</text>
</comment>
<organism>
    <name type="scientific">Picrophilus torridus (strain ATCC 700027 / DSM 9790 / JCM 10055 / NBRC 100828 / KAW 2/3)</name>
    <dbReference type="NCBI Taxonomy" id="1122961"/>
    <lineage>
        <taxon>Archaea</taxon>
        <taxon>Methanobacteriati</taxon>
        <taxon>Thermoplasmatota</taxon>
        <taxon>Thermoplasmata</taxon>
        <taxon>Thermoplasmatales</taxon>
        <taxon>Picrophilaceae</taxon>
        <taxon>Picrophilus</taxon>
    </lineage>
</organism>
<sequence>MAEENKNNENFQYIVRIANKDLNGERPLKLALADLKGIGLRLSETIAKKLDLDPDQRIGELGEDKIEELRKYIEGKVYDGIPYWMYNHRRDITTGKDFNLVSNDLDLQINDDINLMKKMRSYKGIRHERGLKVRGQRMRSNGRKGLAIGVVRKKEEKK</sequence>
<protein>
    <recommendedName>
        <fullName evidence="1">Small ribosomal subunit protein uS13</fullName>
    </recommendedName>
    <alternativeName>
        <fullName evidence="2">30S ribosomal protein S13</fullName>
    </alternativeName>
</protein>